<accession>P24380</accession>
<protein>
    <recommendedName>
        <fullName>Envelope glycoprotein E</fullName>
        <shortName>gE</shortName>
    </recommendedName>
</protein>
<proteinExistence type="inferred from homology"/>
<evidence type="ECO:0000250" key="1"/>
<evidence type="ECO:0000255" key="2"/>
<evidence type="ECO:0000256" key="3">
    <source>
        <dbReference type="SAM" id="MobiDB-lite"/>
    </source>
</evidence>
<evidence type="ECO:0000305" key="4"/>
<organism>
    <name type="scientific">Equine herpesvirus 1 (strain Kentucky D)</name>
    <name type="common">EHV-1</name>
    <name type="synonym">Equine abortion virus</name>
    <dbReference type="NCBI Taxonomy" id="10330"/>
    <lineage>
        <taxon>Viruses</taxon>
        <taxon>Duplodnaviria</taxon>
        <taxon>Heunggongvirae</taxon>
        <taxon>Peploviricota</taxon>
        <taxon>Herviviricetes</taxon>
        <taxon>Herpesvirales</taxon>
        <taxon>Orthoherpesviridae</taxon>
        <taxon>Alphaherpesvirinae</taxon>
        <taxon>Varicellovirus</taxon>
        <taxon>Varicellovirus equidalpha1</taxon>
        <taxon>Equid alphaherpesvirus 1</taxon>
    </lineage>
</organism>
<name>GE_EHV1D</name>
<organismHost>
    <name type="scientific">Equus caballus</name>
    <name type="common">Horse</name>
    <dbReference type="NCBI Taxonomy" id="9796"/>
</organismHost>
<dbReference type="PIR" id="D36646">
    <property type="entry name" value="VGBEKD"/>
</dbReference>
<dbReference type="SMR" id="P24380"/>
<dbReference type="GlyCosmos" id="P24380">
    <property type="glycosylation" value="5 sites, No reported glycans"/>
</dbReference>
<dbReference type="GO" id="GO:0044175">
    <property type="term" value="C:host cell endosome membrane"/>
    <property type="evidence" value="ECO:0007669"/>
    <property type="project" value="UniProtKB-SubCell"/>
</dbReference>
<dbReference type="GO" id="GO:0044178">
    <property type="term" value="C:host cell Golgi membrane"/>
    <property type="evidence" value="ECO:0007669"/>
    <property type="project" value="UniProtKB-SubCell"/>
</dbReference>
<dbReference type="GO" id="GO:0044156">
    <property type="term" value="C:host cell junction"/>
    <property type="evidence" value="ECO:0007669"/>
    <property type="project" value="UniProtKB-SubCell"/>
</dbReference>
<dbReference type="GO" id="GO:0016020">
    <property type="term" value="C:membrane"/>
    <property type="evidence" value="ECO:0007669"/>
    <property type="project" value="UniProtKB-KW"/>
</dbReference>
<dbReference type="GO" id="GO:0019031">
    <property type="term" value="C:viral envelope"/>
    <property type="evidence" value="ECO:0007669"/>
    <property type="project" value="UniProtKB-KW"/>
</dbReference>
<dbReference type="GO" id="GO:0055036">
    <property type="term" value="C:virion membrane"/>
    <property type="evidence" value="ECO:0007669"/>
    <property type="project" value="UniProtKB-SubCell"/>
</dbReference>
<dbReference type="Gene3D" id="2.60.40.10">
    <property type="entry name" value="Immunoglobulins"/>
    <property type="match status" value="1"/>
</dbReference>
<dbReference type="InterPro" id="IPR003404">
    <property type="entry name" value="Herpes_glycopE_Fc"/>
</dbReference>
<dbReference type="InterPro" id="IPR036179">
    <property type="entry name" value="Ig-like_dom_sf"/>
</dbReference>
<dbReference type="InterPro" id="IPR013783">
    <property type="entry name" value="Ig-like_fold"/>
</dbReference>
<dbReference type="Pfam" id="PF02480">
    <property type="entry name" value="Herpes_gE"/>
    <property type="match status" value="1"/>
</dbReference>
<dbReference type="SUPFAM" id="SSF48726">
    <property type="entry name" value="Immunoglobulin"/>
    <property type="match status" value="1"/>
</dbReference>
<comment type="function">
    <text evidence="1">In epithelial cells, the heterodimer gE/gI is required for the cell-to-cell spread of the virus, by sorting nascent virions to cell junctions. Once the virus reaches the cell junctions, virus particles can spread to adjacent cells extremely rapidly through interactions with cellular receptors that accumulate at these junctions. Implicated in basolateral spread in polarized cells. In neuronal cells, gE/gI is essential for the anterograde spread of the infection throughout the host nervous system. Together with US9, the heterodimer gE/gI is involved in the sorting and transport of viral structural components toward axon tips (By similarity).</text>
</comment>
<comment type="subunit">
    <text evidence="1">Interacts with gI.</text>
</comment>
<comment type="subcellular location">
    <subcellularLocation>
        <location evidence="1">Virion membrane</location>
        <topology evidence="1">Single-pass type I membrane protein</topology>
    </subcellularLocation>
    <subcellularLocation>
        <location evidence="1">Host cell membrane</location>
        <topology evidence="1">Single-pass type I membrane protein</topology>
    </subcellularLocation>
    <subcellularLocation>
        <location evidence="1">Host cell junction</location>
    </subcellularLocation>
    <subcellularLocation>
        <location evidence="1">Host Golgi apparatus membrane</location>
        <topology evidence="1">Single-pass membrane protein</topology>
    </subcellularLocation>
    <subcellularLocation>
        <location evidence="1">Host endosome membrane</location>
        <topology evidence="1">Single-pass membrane protein</topology>
    </subcellularLocation>
    <text evidence="1">During virion morphogenesis, this protein probably accumulates in the endosomes and trans-Golgi where secondary envelopment occurs. It is probably transported to the cell surface from where it is endocytosed and directed to the trans-Golgi network (TGN), maybe through an interaction with PACS-1 sorting protein. The heterodimer gE/gI then redistributes to cell junctions to promote cell-cell spread later in the infection (By similarity).</text>
</comment>
<comment type="PTM">
    <text evidence="4">Phosphorylated on serines within the acidic cluster. Phosphorylation determines whether endocytosed viral gE traffics to the trans-Golgi network or recycles to the cell membrane.</text>
</comment>
<comment type="similarity">
    <text evidence="4">Belongs to the alphaherpesvirinae glycoprotein E family.</text>
</comment>
<keyword id="KW-1015">Disulfide bond</keyword>
<keyword id="KW-0325">Glycoprotein</keyword>
<keyword id="KW-1031">Host cell junction</keyword>
<keyword id="KW-1032">Host cell membrane</keyword>
<keyword id="KW-1039">Host endosome</keyword>
<keyword id="KW-1040">Host Golgi apparatus</keyword>
<keyword id="KW-1043">Host membrane</keyword>
<keyword id="KW-0472">Membrane</keyword>
<keyword id="KW-0732">Signal</keyword>
<keyword id="KW-0812">Transmembrane</keyword>
<keyword id="KW-1133">Transmembrane helix</keyword>
<keyword id="KW-0261">Viral envelope protein</keyword>
<keyword id="KW-0946">Virion</keyword>
<feature type="signal peptide" evidence="2">
    <location>
        <begin position="1"/>
        <end position="23"/>
    </location>
</feature>
<feature type="chain" id="PRO_0000038230" description="Envelope glycoprotein E">
    <location>
        <begin position="24"/>
        <end position="552"/>
    </location>
</feature>
<feature type="topological domain" description="Virion surface" evidence="2">
    <location>
        <begin position="24"/>
        <end position="410"/>
    </location>
</feature>
<feature type="transmembrane region" description="Helical" evidence="2">
    <location>
        <begin position="411"/>
        <end position="427"/>
    </location>
</feature>
<feature type="topological domain" description="Intravirion" evidence="2">
    <location>
        <begin position="428"/>
        <end position="552"/>
    </location>
</feature>
<feature type="region of interest" description="Interaction with gI" evidence="1">
    <location>
        <begin position="65"/>
        <end position="91"/>
    </location>
</feature>
<feature type="region of interest" description="Acidic" evidence="1">
    <location>
        <begin position="470"/>
        <end position="478"/>
    </location>
</feature>
<feature type="region of interest" description="Disordered" evidence="3">
    <location>
        <begin position="473"/>
        <end position="515"/>
    </location>
</feature>
<feature type="short sequence motif" description="Internalization motif" evidence="2">
    <location>
        <begin position="451"/>
        <end position="454"/>
    </location>
</feature>
<feature type="compositionally biased region" description="Acidic residues" evidence="3">
    <location>
        <begin position="473"/>
        <end position="486"/>
    </location>
</feature>
<feature type="compositionally biased region" description="Pro residues" evidence="3">
    <location>
        <begin position="487"/>
        <end position="498"/>
    </location>
</feature>
<feature type="glycosylation site" description="N-linked (GlcNAc...) asparagine; by host" evidence="2">
    <location>
        <position position="47"/>
    </location>
</feature>
<feature type="glycosylation site" description="N-linked (GlcNAc...) asparagine; by host" evidence="2">
    <location>
        <position position="109"/>
    </location>
</feature>
<feature type="glycosylation site" description="N-linked (GlcNAc...) asparagine; by host" evidence="2">
    <location>
        <position position="122"/>
    </location>
</feature>
<feature type="glycosylation site" description="N-linked (GlcNAc...) asparagine; by host" evidence="2">
    <location>
        <position position="243"/>
    </location>
</feature>
<feature type="glycosylation site" description="N-linked (GlcNAc...) asparagine; by host" evidence="2">
    <location>
        <position position="293"/>
    </location>
</feature>
<feature type="disulfide bond" evidence="1">
    <location>
        <begin position="249"/>
        <end position="275"/>
    </location>
</feature>
<feature type="disulfide bond" evidence="1">
    <location>
        <begin position="258"/>
        <end position="267"/>
    </location>
</feature>
<feature type="disulfide bond" evidence="1">
    <location>
        <begin position="294"/>
        <end position="305"/>
    </location>
</feature>
<gene>
    <name type="primary">gE</name>
</gene>
<sequence length="552" mass="61493">MELLAASRACIFFGLVTVLDAWGVQQVELSEGAWAMIDGRDVLTPTNTTTRVTKAWTFLETPPGCAGDISVKKVCVSHSLCEDNIIIGKHCNLLTGEHGIALAEFNVVNGSLRRTDDVYFVNGTVFPILAETRSVLQIHRATPSIAGVYTLHVSIDGMMKHSVVLLTVKKPPKQPQPQPRLRVKTPPPVTVPQVPVKTHTDFVVHGYHSRVYRDGESFELSVNLESHIVEPSFSAEIQWYYMNTSSSSCDLFRVFETCIFHPTAMACLHPEQHTCSFTSPIRATKILHRVYGNCSDHGNSWPSRCHSTLLGNRLYFIQPAQNRVDLLFKDTPASATGLYVFVLLYNGHPEAWTYTLLSTANHFMNVLTDVTRPRLGEHFYTDLGHKIITPHPSVATTEELGAWTRHYLAFLLVIICTCAALLVALVVWGCILYIRSNRKPYEVLNPFETVYTSVPSNDPSDEVLVFERLASDSDDSFDSDSDEELEYPPPPKPAPQLPPYQFVDGGDAPSGRSGFKVWFRDTPEASPVPLHKPTLQGPDYSRVASKLKSILK</sequence>
<reference key="1">
    <citation type="journal article" date="1990" name="J. Gen. Virol.">
        <title>Equine herpesvirus type 1 unique short fragment encodes glycoproteins with homology to herpes simplex virus type 1 gD, gI and gE.</title>
        <authorList>
            <person name="Audonnet J.-C."/>
            <person name="Winslow J."/>
            <person name="Allen G."/>
            <person name="Paoletti E."/>
        </authorList>
    </citation>
    <scope>NUCLEOTIDE SEQUENCE [GENOMIC DNA]</scope>
</reference>